<gene>
    <name type="primary">cdc6</name>
</gene>
<geneLocation type="plasmid">
    <name>pFV1</name>
</geneLocation>
<organism>
    <name type="scientific">Methanothermobacter thermautotrophicus</name>
    <name type="common">Methanobacterium thermoformicicum</name>
    <dbReference type="NCBI Taxonomy" id="145262"/>
    <lineage>
        <taxon>Archaea</taxon>
        <taxon>Methanobacteriati</taxon>
        <taxon>Methanobacteriota</taxon>
        <taxon>Methanomada group</taxon>
        <taxon>Methanobacteria</taxon>
        <taxon>Methanobacteriales</taxon>
        <taxon>Methanobacteriaceae</taxon>
        <taxon>Methanothermobacter</taxon>
    </lineage>
</organism>
<accession>P29569</accession>
<keyword id="KW-0067">ATP-binding</keyword>
<keyword id="KW-0235">DNA replication</keyword>
<keyword id="KW-0547">Nucleotide-binding</keyword>
<keyword id="KW-0614">Plasmid</keyword>
<sequence length="364" mass="40743">MFEKRPRLFKNRDVLSPLFVPDTLQDRKEEVGAISQYLGYILDGATPPHLLIVGPPGSGKTVTTKYVINELEKHTSDAVIEYIVADGTAYQVATSIARAPRRGLGFLNIVEKIRERASEGKMIIVMDEIDKTLSRDGDKLLYHLSREPNVCIVGLSNKLTVMDMIGDSGVISSFKPRRISFAPYSAPQLEEILNYRVEMAFNDGVLEDDVVPLCAALAAQRNGDARYALDLLSFAADIAIRQLKGVVSESDVRMATDEVEVEFIRRSIEQLRDNQKILLYAVMTSHGGTPTEIYRKYNKMTEEQFGGNALTQRRLSQLLRELELYGLVEIEVVGRGRGRGVNWHVVPSSSIDPELMLEAIRRSL</sequence>
<evidence type="ECO:0000255" key="1">
    <source>
        <dbReference type="HAMAP-Rule" id="MF_01407"/>
    </source>
</evidence>
<comment type="function">
    <text evidence="1">Involved in regulation of DNA replication.</text>
</comment>
<comment type="similarity">
    <text evidence="1">Belongs to the CDC6/cdc18 family.</text>
</comment>
<proteinExistence type="inferred from homology"/>
<feature type="chain" id="PRO_0000151007" description="ORC1-type DNA replication protein">
    <location>
        <begin position="1"/>
        <end position="364"/>
    </location>
</feature>
<feature type="binding site" evidence="1">
    <location>
        <begin position="58"/>
        <end position="62"/>
    </location>
    <ligand>
        <name>ATP</name>
        <dbReference type="ChEBI" id="CHEBI:30616"/>
    </ligand>
</feature>
<feature type="binding site" evidence="1">
    <location>
        <position position="184"/>
    </location>
    <ligand>
        <name>ATP</name>
        <dbReference type="ChEBI" id="CHEBI:30616"/>
    </ligand>
</feature>
<feature type="binding site" evidence="1">
    <location>
        <position position="196"/>
    </location>
    <ligand>
        <name>ATP</name>
        <dbReference type="ChEBI" id="CHEBI:30616"/>
    </ligand>
</feature>
<protein>
    <recommendedName>
        <fullName evidence="1">ORC1-type DNA replication protein</fullName>
    </recommendedName>
</protein>
<reference key="1">
    <citation type="journal article" date="1992" name="Nucleic Acids Res.">
        <title>Modular organization of related Archaeal plasmids encoding different restriction-modification systems in Methanobacterium thermoformicicum.</title>
        <authorList>
            <person name="Noelling J."/>
            <person name="van Eeden F.J.M."/>
            <person name="Eggen R.I.L."/>
            <person name="de Vos W.M."/>
        </authorList>
    </citation>
    <scope>NUCLEOTIDE SEQUENCE [GENOMIC DNA]</scope>
    <source>
        <strain>DSM 3848 / THF</strain>
    </source>
</reference>
<dbReference type="EMBL" id="X68366">
    <property type="protein sequence ID" value="CAA48437.1"/>
    <property type="molecule type" value="Genomic_DNA"/>
</dbReference>
<dbReference type="PIR" id="S30314">
    <property type="entry name" value="S26448"/>
</dbReference>
<dbReference type="RefSeq" id="NP_039754.1">
    <property type="nucleotide sequence ID" value="NC_001336.1"/>
</dbReference>
<dbReference type="RefSeq" id="WP_010889852.1">
    <property type="nucleotide sequence ID" value="NC_001336.1"/>
</dbReference>
<dbReference type="SMR" id="P29569"/>
<dbReference type="GO" id="GO:0005524">
    <property type="term" value="F:ATP binding"/>
    <property type="evidence" value="ECO:0007669"/>
    <property type="project" value="UniProtKB-UniRule"/>
</dbReference>
<dbReference type="GO" id="GO:0016887">
    <property type="term" value="F:ATP hydrolysis activity"/>
    <property type="evidence" value="ECO:0007669"/>
    <property type="project" value="InterPro"/>
</dbReference>
<dbReference type="GO" id="GO:0006260">
    <property type="term" value="P:DNA replication"/>
    <property type="evidence" value="ECO:0007669"/>
    <property type="project" value="UniProtKB-UniRule"/>
</dbReference>
<dbReference type="CDD" id="cd00009">
    <property type="entry name" value="AAA"/>
    <property type="match status" value="1"/>
</dbReference>
<dbReference type="FunFam" id="1.10.8.60:FF:000073">
    <property type="entry name" value="ORC1-type DNA replication protein"/>
    <property type="match status" value="1"/>
</dbReference>
<dbReference type="Gene3D" id="1.10.8.60">
    <property type="match status" value="1"/>
</dbReference>
<dbReference type="Gene3D" id="3.40.50.300">
    <property type="entry name" value="P-loop containing nucleotide triphosphate hydrolases"/>
    <property type="match status" value="1"/>
</dbReference>
<dbReference type="Gene3D" id="1.10.10.10">
    <property type="entry name" value="Winged helix-like DNA-binding domain superfamily/Winged helix DNA-binding domain"/>
    <property type="match status" value="1"/>
</dbReference>
<dbReference type="HAMAP" id="MF_01407">
    <property type="entry name" value="ORC1_type_DNA_replic_protein"/>
    <property type="match status" value="1"/>
</dbReference>
<dbReference type="InterPro" id="IPR003593">
    <property type="entry name" value="AAA+_ATPase"/>
</dbReference>
<dbReference type="InterPro" id="IPR049945">
    <property type="entry name" value="AAA_22"/>
</dbReference>
<dbReference type="InterPro" id="IPR015163">
    <property type="entry name" value="Cdc6_C"/>
</dbReference>
<dbReference type="InterPro" id="IPR055237">
    <property type="entry name" value="Cdc6_lid"/>
</dbReference>
<dbReference type="InterPro" id="IPR050311">
    <property type="entry name" value="ORC1/CDC6"/>
</dbReference>
<dbReference type="InterPro" id="IPR014277">
    <property type="entry name" value="Orc1/Cdc6_arc"/>
</dbReference>
<dbReference type="InterPro" id="IPR027417">
    <property type="entry name" value="P-loop_NTPase"/>
</dbReference>
<dbReference type="InterPro" id="IPR036388">
    <property type="entry name" value="WH-like_DNA-bd_sf"/>
</dbReference>
<dbReference type="InterPro" id="IPR036390">
    <property type="entry name" value="WH_DNA-bd_sf"/>
</dbReference>
<dbReference type="NCBIfam" id="TIGR02928">
    <property type="entry name" value="orc1/cdc6 family replication initiation protein"/>
    <property type="match status" value="1"/>
</dbReference>
<dbReference type="PANTHER" id="PTHR10763">
    <property type="entry name" value="CELL DIVISION CONTROL PROTEIN 6-RELATED"/>
    <property type="match status" value="1"/>
</dbReference>
<dbReference type="PANTHER" id="PTHR10763:SF22">
    <property type="entry name" value="ORC1-TYPE DNA REPLICATION PROTEIN"/>
    <property type="match status" value="1"/>
</dbReference>
<dbReference type="Pfam" id="PF13401">
    <property type="entry name" value="AAA_22"/>
    <property type="match status" value="1"/>
</dbReference>
<dbReference type="Pfam" id="PF09079">
    <property type="entry name" value="Cdc6_C"/>
    <property type="match status" value="1"/>
</dbReference>
<dbReference type="Pfam" id="PF22703">
    <property type="entry name" value="Cdc6_lid"/>
    <property type="match status" value="1"/>
</dbReference>
<dbReference type="SMART" id="SM00382">
    <property type="entry name" value="AAA"/>
    <property type="match status" value="1"/>
</dbReference>
<dbReference type="SMART" id="SM01074">
    <property type="entry name" value="Cdc6_C"/>
    <property type="match status" value="1"/>
</dbReference>
<dbReference type="SUPFAM" id="SSF52540">
    <property type="entry name" value="P-loop containing nucleoside triphosphate hydrolases"/>
    <property type="match status" value="1"/>
</dbReference>
<dbReference type="SUPFAM" id="SSF46785">
    <property type="entry name" value="Winged helix' DNA-binding domain"/>
    <property type="match status" value="1"/>
</dbReference>
<name>CDC6V_METTF</name>